<evidence type="ECO:0000255" key="1">
    <source>
        <dbReference type="PROSITE-ProRule" id="PRU00145"/>
    </source>
</evidence>
<sequence>MRYNEKELLSLSRQRAEKAAELSMRGPKKGSVLKKRLVKLVVNFLFYFRIDEEEPIGALLLEHCRVSKEDEKGFSIHFIDEPEKKYMFECSSQEQCVEWVEALTNASYEFMRRSLMFYRNEILKMTGKDPLEQYGISGESRFQLENASL</sequence>
<keyword id="KW-1185">Reference proteome</keyword>
<dbReference type="EMBL" id="BC063351">
    <property type="protein sequence ID" value="AAH63351.1"/>
    <property type="molecule type" value="mRNA"/>
</dbReference>
<dbReference type="RefSeq" id="NP_989166.1">
    <property type="nucleotide sequence ID" value="NM_203835.1"/>
</dbReference>
<dbReference type="SMR" id="Q6P4L6"/>
<dbReference type="FunCoup" id="Q6P4L6">
    <property type="interactions" value="593"/>
</dbReference>
<dbReference type="STRING" id="8364.ENSXETP00000036047"/>
<dbReference type="PaxDb" id="8364-ENSXETP00000053593"/>
<dbReference type="DNASU" id="394773"/>
<dbReference type="GeneID" id="394773"/>
<dbReference type="KEGG" id="xtr:394773"/>
<dbReference type="AGR" id="Xenbase:XB-GENE-491518"/>
<dbReference type="CTD" id="55111"/>
<dbReference type="Xenbase" id="XB-GENE-491518">
    <property type="gene designation" value="plekhj1"/>
</dbReference>
<dbReference type="eggNOG" id="KOG0017">
    <property type="taxonomic scope" value="Eukaryota"/>
</dbReference>
<dbReference type="HOGENOM" id="CLU_141382_0_0_1"/>
<dbReference type="InParanoid" id="Q6P4L6"/>
<dbReference type="OMA" id="EEQCKEW"/>
<dbReference type="OrthoDB" id="10055808at2759"/>
<dbReference type="PhylomeDB" id="Q6P4L6"/>
<dbReference type="TreeFam" id="TF331914"/>
<dbReference type="Proteomes" id="UP000008143">
    <property type="component" value="Chromosome 1"/>
</dbReference>
<dbReference type="CDD" id="cd13258">
    <property type="entry name" value="PH_PLEKHJ1"/>
    <property type="match status" value="1"/>
</dbReference>
<dbReference type="FunFam" id="2.30.29.30:FF:000300">
    <property type="entry name" value="pleckstrin homology domain-containing family J member 1"/>
    <property type="match status" value="1"/>
</dbReference>
<dbReference type="Gene3D" id="2.30.29.30">
    <property type="entry name" value="Pleckstrin-homology domain (PH domain)/Phosphotyrosine-binding domain (PTB)"/>
    <property type="match status" value="1"/>
</dbReference>
<dbReference type="InterPro" id="IPR045188">
    <property type="entry name" value="Boi1/Boi2-like"/>
</dbReference>
<dbReference type="InterPro" id="IPR011993">
    <property type="entry name" value="PH-like_dom_sf"/>
</dbReference>
<dbReference type="InterPro" id="IPR001849">
    <property type="entry name" value="PH_domain"/>
</dbReference>
<dbReference type="PANTHER" id="PTHR22902:SF9">
    <property type="entry name" value="PLECKSTRIN HOMOLOGY DOMAIN-CONTAINING FAMILY J MEMBER 1"/>
    <property type="match status" value="1"/>
</dbReference>
<dbReference type="PANTHER" id="PTHR22902">
    <property type="entry name" value="SESQUIPEDALIAN"/>
    <property type="match status" value="1"/>
</dbReference>
<dbReference type="Pfam" id="PF00169">
    <property type="entry name" value="PH"/>
    <property type="match status" value="1"/>
</dbReference>
<dbReference type="SMART" id="SM00233">
    <property type="entry name" value="PH"/>
    <property type="match status" value="1"/>
</dbReference>
<dbReference type="SUPFAM" id="SSF50729">
    <property type="entry name" value="PH domain-like"/>
    <property type="match status" value="1"/>
</dbReference>
<dbReference type="PROSITE" id="PS50003">
    <property type="entry name" value="PH_DOMAIN"/>
    <property type="match status" value="1"/>
</dbReference>
<feature type="chain" id="PRO_0000309235" description="Pleckstrin homology domain-containing family J member 1">
    <location>
        <begin position="1"/>
        <end position="149"/>
    </location>
</feature>
<feature type="domain" description="PH" evidence="1">
    <location>
        <begin position="15"/>
        <end position="108"/>
    </location>
</feature>
<protein>
    <recommendedName>
        <fullName>Pleckstrin homology domain-containing family J member 1</fullName>
        <shortName>PH domain-containing family J member 1</shortName>
    </recommendedName>
</protein>
<accession>Q6P4L6</accession>
<name>PKHJ1_XENTR</name>
<gene>
    <name type="primary">plekhj1</name>
</gene>
<proteinExistence type="evidence at transcript level"/>
<reference key="1">
    <citation type="submission" date="2003-12" db="EMBL/GenBank/DDBJ databases">
        <authorList>
            <consortium name="NIH - Xenopus Gene Collection (XGC) project"/>
        </authorList>
    </citation>
    <scope>NUCLEOTIDE SEQUENCE [LARGE SCALE MRNA]</scope>
    <source>
        <tissue>Embryo</tissue>
    </source>
</reference>
<organism>
    <name type="scientific">Xenopus tropicalis</name>
    <name type="common">Western clawed frog</name>
    <name type="synonym">Silurana tropicalis</name>
    <dbReference type="NCBI Taxonomy" id="8364"/>
    <lineage>
        <taxon>Eukaryota</taxon>
        <taxon>Metazoa</taxon>
        <taxon>Chordata</taxon>
        <taxon>Craniata</taxon>
        <taxon>Vertebrata</taxon>
        <taxon>Euteleostomi</taxon>
        <taxon>Amphibia</taxon>
        <taxon>Batrachia</taxon>
        <taxon>Anura</taxon>
        <taxon>Pipoidea</taxon>
        <taxon>Pipidae</taxon>
        <taxon>Xenopodinae</taxon>
        <taxon>Xenopus</taxon>
        <taxon>Silurana</taxon>
    </lineage>
</organism>